<accession>Q74E87</accession>
<feature type="chain" id="PRO_0000224871" description="Holliday junction branch migration complex subunit RuvA">
    <location>
        <begin position="1"/>
        <end position="199"/>
    </location>
</feature>
<feature type="region of interest" description="Domain I" evidence="1">
    <location>
        <begin position="1"/>
        <end position="64"/>
    </location>
</feature>
<feature type="region of interest" description="Domain II" evidence="1">
    <location>
        <begin position="65"/>
        <end position="143"/>
    </location>
</feature>
<feature type="region of interest" description="Flexible linker" evidence="1">
    <location>
        <begin position="144"/>
        <end position="154"/>
    </location>
</feature>
<feature type="region of interest" description="Domain III" evidence="1">
    <location>
        <begin position="154"/>
        <end position="199"/>
    </location>
</feature>
<gene>
    <name evidence="1" type="primary">ruvA</name>
    <name type="ordered locus">GSU1076</name>
</gene>
<name>RUVA_GEOSL</name>
<protein>
    <recommendedName>
        <fullName evidence="1">Holliday junction branch migration complex subunit RuvA</fullName>
    </recommendedName>
</protein>
<keyword id="KW-0963">Cytoplasm</keyword>
<keyword id="KW-0227">DNA damage</keyword>
<keyword id="KW-0233">DNA recombination</keyword>
<keyword id="KW-0234">DNA repair</keyword>
<keyword id="KW-0238">DNA-binding</keyword>
<keyword id="KW-1185">Reference proteome</keyword>
<organism>
    <name type="scientific">Geobacter sulfurreducens (strain ATCC 51573 / DSM 12127 / PCA)</name>
    <dbReference type="NCBI Taxonomy" id="243231"/>
    <lineage>
        <taxon>Bacteria</taxon>
        <taxon>Pseudomonadati</taxon>
        <taxon>Thermodesulfobacteriota</taxon>
        <taxon>Desulfuromonadia</taxon>
        <taxon>Geobacterales</taxon>
        <taxon>Geobacteraceae</taxon>
        <taxon>Geobacter</taxon>
    </lineage>
</organism>
<reference key="1">
    <citation type="journal article" date="2003" name="Science">
        <title>Genome of Geobacter sulfurreducens: metal reduction in subsurface environments.</title>
        <authorList>
            <person name="Methe B.A."/>
            <person name="Nelson K.E."/>
            <person name="Eisen J.A."/>
            <person name="Paulsen I.T."/>
            <person name="Nelson W.C."/>
            <person name="Heidelberg J.F."/>
            <person name="Wu D."/>
            <person name="Wu M."/>
            <person name="Ward N.L."/>
            <person name="Beanan M.J."/>
            <person name="Dodson R.J."/>
            <person name="Madupu R."/>
            <person name="Brinkac L.M."/>
            <person name="Daugherty S.C."/>
            <person name="DeBoy R.T."/>
            <person name="Durkin A.S."/>
            <person name="Gwinn M.L."/>
            <person name="Kolonay J.F."/>
            <person name="Sullivan S.A."/>
            <person name="Haft D.H."/>
            <person name="Selengut J."/>
            <person name="Davidsen T.M."/>
            <person name="Zafar N."/>
            <person name="White O."/>
            <person name="Tran B."/>
            <person name="Romero C."/>
            <person name="Forberger H.A."/>
            <person name="Weidman J.F."/>
            <person name="Khouri H.M."/>
            <person name="Feldblyum T.V."/>
            <person name="Utterback T.R."/>
            <person name="Van Aken S.E."/>
            <person name="Lovley D.R."/>
            <person name="Fraser C.M."/>
        </authorList>
    </citation>
    <scope>NUCLEOTIDE SEQUENCE [LARGE SCALE GENOMIC DNA]</scope>
    <source>
        <strain>ATCC 51573 / DSM 12127 / PCA</strain>
    </source>
</reference>
<comment type="function">
    <text evidence="1">The RuvA-RuvB-RuvC complex processes Holliday junction (HJ) DNA during genetic recombination and DNA repair, while the RuvA-RuvB complex plays an important role in the rescue of blocked DNA replication forks via replication fork reversal (RFR). RuvA specifically binds to HJ cruciform DNA, conferring on it an open structure. The RuvB hexamer acts as an ATP-dependent pump, pulling dsDNA into and through the RuvAB complex. HJ branch migration allows RuvC to scan DNA until it finds its consensus sequence, where it cleaves and resolves the cruciform DNA.</text>
</comment>
<comment type="subunit">
    <text evidence="1">Homotetramer. Forms an RuvA(8)-RuvB(12)-Holliday junction (HJ) complex. HJ DNA is sandwiched between 2 RuvA tetramers; dsDNA enters through RuvA and exits via RuvB. An RuvB hexamer assembles on each DNA strand where it exits the tetramer. Each RuvB hexamer is contacted by two RuvA subunits (via domain III) on 2 adjacent RuvB subunits; this complex drives branch migration. In the full resolvosome a probable DNA-RuvA(4)-RuvB(12)-RuvC(2) complex forms which resolves the HJ.</text>
</comment>
<comment type="subcellular location">
    <subcellularLocation>
        <location evidence="1">Cytoplasm</location>
    </subcellularLocation>
</comment>
<comment type="domain">
    <text evidence="1">Has three domains with a flexible linker between the domains II and III and assumes an 'L' shape. Domain III is highly mobile and contacts RuvB.</text>
</comment>
<comment type="similarity">
    <text evidence="1">Belongs to the RuvA family.</text>
</comment>
<dbReference type="EMBL" id="AE017180">
    <property type="protein sequence ID" value="AAR34402.1"/>
    <property type="molecule type" value="Genomic_DNA"/>
</dbReference>
<dbReference type="RefSeq" id="NP_952129.1">
    <property type="nucleotide sequence ID" value="NC_002939.5"/>
</dbReference>
<dbReference type="RefSeq" id="WP_010941737.1">
    <property type="nucleotide sequence ID" value="NC_002939.5"/>
</dbReference>
<dbReference type="SMR" id="Q74E87"/>
<dbReference type="FunCoup" id="Q74E87">
    <property type="interactions" value="281"/>
</dbReference>
<dbReference type="STRING" id="243231.GSU1076"/>
<dbReference type="EnsemblBacteria" id="AAR34402">
    <property type="protein sequence ID" value="AAR34402"/>
    <property type="gene ID" value="GSU1076"/>
</dbReference>
<dbReference type="KEGG" id="gsu:GSU1076"/>
<dbReference type="PATRIC" id="fig|243231.5.peg.1074"/>
<dbReference type="eggNOG" id="COG0632">
    <property type="taxonomic scope" value="Bacteria"/>
</dbReference>
<dbReference type="HOGENOM" id="CLU_087936_0_0_7"/>
<dbReference type="InParanoid" id="Q74E87"/>
<dbReference type="OrthoDB" id="5293449at2"/>
<dbReference type="Proteomes" id="UP000000577">
    <property type="component" value="Chromosome"/>
</dbReference>
<dbReference type="GO" id="GO:0005737">
    <property type="term" value="C:cytoplasm"/>
    <property type="evidence" value="ECO:0007669"/>
    <property type="project" value="UniProtKB-SubCell"/>
</dbReference>
<dbReference type="GO" id="GO:0009379">
    <property type="term" value="C:Holliday junction helicase complex"/>
    <property type="evidence" value="ECO:0007669"/>
    <property type="project" value="InterPro"/>
</dbReference>
<dbReference type="GO" id="GO:0048476">
    <property type="term" value="C:Holliday junction resolvase complex"/>
    <property type="evidence" value="ECO:0007669"/>
    <property type="project" value="UniProtKB-UniRule"/>
</dbReference>
<dbReference type="GO" id="GO:0005524">
    <property type="term" value="F:ATP binding"/>
    <property type="evidence" value="ECO:0007669"/>
    <property type="project" value="InterPro"/>
</dbReference>
<dbReference type="GO" id="GO:0000400">
    <property type="term" value="F:four-way junction DNA binding"/>
    <property type="evidence" value="ECO:0007669"/>
    <property type="project" value="UniProtKB-UniRule"/>
</dbReference>
<dbReference type="GO" id="GO:0009378">
    <property type="term" value="F:four-way junction helicase activity"/>
    <property type="evidence" value="ECO:0000318"/>
    <property type="project" value="GO_Central"/>
</dbReference>
<dbReference type="GO" id="GO:0006310">
    <property type="term" value="P:DNA recombination"/>
    <property type="evidence" value="ECO:0007669"/>
    <property type="project" value="UniProtKB-UniRule"/>
</dbReference>
<dbReference type="GO" id="GO:0006281">
    <property type="term" value="P:DNA repair"/>
    <property type="evidence" value="ECO:0007669"/>
    <property type="project" value="UniProtKB-UniRule"/>
</dbReference>
<dbReference type="GO" id="GO:0009432">
    <property type="term" value="P:SOS response"/>
    <property type="evidence" value="ECO:0000318"/>
    <property type="project" value="GO_Central"/>
</dbReference>
<dbReference type="CDD" id="cd14332">
    <property type="entry name" value="UBA_RuvA_C"/>
    <property type="match status" value="1"/>
</dbReference>
<dbReference type="Gene3D" id="1.10.150.20">
    <property type="entry name" value="5' to 3' exonuclease, C-terminal subdomain"/>
    <property type="match status" value="1"/>
</dbReference>
<dbReference type="Gene3D" id="1.10.8.10">
    <property type="entry name" value="DNA helicase RuvA subunit, C-terminal domain"/>
    <property type="match status" value="1"/>
</dbReference>
<dbReference type="Gene3D" id="2.40.50.140">
    <property type="entry name" value="Nucleic acid-binding proteins"/>
    <property type="match status" value="1"/>
</dbReference>
<dbReference type="HAMAP" id="MF_00031">
    <property type="entry name" value="DNA_HJ_migration_RuvA"/>
    <property type="match status" value="1"/>
</dbReference>
<dbReference type="InterPro" id="IPR013849">
    <property type="entry name" value="DNA_helicase_Holl-junc_RuvA_I"/>
</dbReference>
<dbReference type="InterPro" id="IPR003583">
    <property type="entry name" value="Hlx-hairpin-Hlx_DNA-bd_motif"/>
</dbReference>
<dbReference type="InterPro" id="IPR012340">
    <property type="entry name" value="NA-bd_OB-fold"/>
</dbReference>
<dbReference type="InterPro" id="IPR000085">
    <property type="entry name" value="RuvA"/>
</dbReference>
<dbReference type="InterPro" id="IPR010994">
    <property type="entry name" value="RuvA_2-like"/>
</dbReference>
<dbReference type="InterPro" id="IPR011114">
    <property type="entry name" value="RuvA_C"/>
</dbReference>
<dbReference type="InterPro" id="IPR036267">
    <property type="entry name" value="RuvA_C_sf"/>
</dbReference>
<dbReference type="NCBIfam" id="TIGR00084">
    <property type="entry name" value="ruvA"/>
    <property type="match status" value="1"/>
</dbReference>
<dbReference type="Pfam" id="PF14520">
    <property type="entry name" value="HHH_5"/>
    <property type="match status" value="1"/>
</dbReference>
<dbReference type="Pfam" id="PF07499">
    <property type="entry name" value="RuvA_C"/>
    <property type="match status" value="1"/>
</dbReference>
<dbReference type="Pfam" id="PF01330">
    <property type="entry name" value="RuvA_N"/>
    <property type="match status" value="1"/>
</dbReference>
<dbReference type="SMART" id="SM00278">
    <property type="entry name" value="HhH1"/>
    <property type="match status" value="2"/>
</dbReference>
<dbReference type="SUPFAM" id="SSF46929">
    <property type="entry name" value="DNA helicase RuvA subunit, C-terminal domain"/>
    <property type="match status" value="1"/>
</dbReference>
<dbReference type="SUPFAM" id="SSF50249">
    <property type="entry name" value="Nucleic acid-binding proteins"/>
    <property type="match status" value="1"/>
</dbReference>
<dbReference type="SUPFAM" id="SSF47781">
    <property type="entry name" value="RuvA domain 2-like"/>
    <property type="match status" value="1"/>
</dbReference>
<sequence>MIALLTGRLAHKSPDAIIIDVNGVGYRVQIPFSTYYELPEEGKTVSLSIHTHVKEDSISLFGFRTLAEKEFFQLLISVSGIGPKMARDILSNIQPEELAAAIVQGNLVRLSSIPGIGKKTAERLVLELKEKVRKMDVAPSAQEAPSSEAPAEVADDVASALVNLGYKEAVVRKVLAEMSIEPDASTEAVLRQALKVLMK</sequence>
<proteinExistence type="inferred from homology"/>
<evidence type="ECO:0000255" key="1">
    <source>
        <dbReference type="HAMAP-Rule" id="MF_00031"/>
    </source>
</evidence>